<protein>
    <recommendedName>
        <fullName>Protein Dicer</fullName>
    </recommendedName>
    <alternativeName>
        <fullName>Cell cycle control protein dcr1</fullName>
    </alternativeName>
    <alternativeName>
        <fullName>RNA interference pathway protein dcr1</fullName>
    </alternativeName>
    <domain>
        <recommendedName>
            <fullName>Endoribonuclease dcr1</fullName>
            <ecNumber>3.1.26.-</ecNumber>
        </recommendedName>
    </domain>
    <domain>
        <recommendedName>
            <fullName>ATP-dependent helicase dcr1</fullName>
            <ecNumber>3.6.4.-</ecNumber>
        </recommendedName>
    </domain>
</protein>
<reference key="1">
    <citation type="journal article" date="2002" name="Nature">
        <title>The genome sequence of Schizosaccharomyces pombe.</title>
        <authorList>
            <person name="Wood V."/>
            <person name="Gwilliam R."/>
            <person name="Rajandream M.A."/>
            <person name="Lyne M.H."/>
            <person name="Lyne R."/>
            <person name="Stewart A."/>
            <person name="Sgouros J.G."/>
            <person name="Peat N."/>
            <person name="Hayles J."/>
            <person name="Baker S.G."/>
            <person name="Basham D."/>
            <person name="Bowman S."/>
            <person name="Brooks K."/>
            <person name="Brown D."/>
            <person name="Brown S."/>
            <person name="Chillingworth T."/>
            <person name="Churcher C.M."/>
            <person name="Collins M."/>
            <person name="Connor R."/>
            <person name="Cronin A."/>
            <person name="Davis P."/>
            <person name="Feltwell T."/>
            <person name="Fraser A."/>
            <person name="Gentles S."/>
            <person name="Goble A."/>
            <person name="Hamlin N."/>
            <person name="Harris D.E."/>
            <person name="Hidalgo J."/>
            <person name="Hodgson G."/>
            <person name="Holroyd S."/>
            <person name="Hornsby T."/>
            <person name="Howarth S."/>
            <person name="Huckle E.J."/>
            <person name="Hunt S."/>
            <person name="Jagels K."/>
            <person name="James K.D."/>
            <person name="Jones L."/>
            <person name="Jones M."/>
            <person name="Leather S."/>
            <person name="McDonald S."/>
            <person name="McLean J."/>
            <person name="Mooney P."/>
            <person name="Moule S."/>
            <person name="Mungall K.L."/>
            <person name="Murphy L.D."/>
            <person name="Niblett D."/>
            <person name="Odell C."/>
            <person name="Oliver K."/>
            <person name="O'Neil S."/>
            <person name="Pearson D."/>
            <person name="Quail M.A."/>
            <person name="Rabbinowitsch E."/>
            <person name="Rutherford K.M."/>
            <person name="Rutter S."/>
            <person name="Saunders D."/>
            <person name="Seeger K."/>
            <person name="Sharp S."/>
            <person name="Skelton J."/>
            <person name="Simmonds M.N."/>
            <person name="Squares R."/>
            <person name="Squares S."/>
            <person name="Stevens K."/>
            <person name="Taylor K."/>
            <person name="Taylor R.G."/>
            <person name="Tivey A."/>
            <person name="Walsh S.V."/>
            <person name="Warren T."/>
            <person name="Whitehead S."/>
            <person name="Woodward J.R."/>
            <person name="Volckaert G."/>
            <person name="Aert R."/>
            <person name="Robben J."/>
            <person name="Grymonprez B."/>
            <person name="Weltjens I."/>
            <person name="Vanstreels E."/>
            <person name="Rieger M."/>
            <person name="Schaefer M."/>
            <person name="Mueller-Auer S."/>
            <person name="Gabel C."/>
            <person name="Fuchs M."/>
            <person name="Duesterhoeft A."/>
            <person name="Fritzc C."/>
            <person name="Holzer E."/>
            <person name="Moestl D."/>
            <person name="Hilbert H."/>
            <person name="Borzym K."/>
            <person name="Langer I."/>
            <person name="Beck A."/>
            <person name="Lehrach H."/>
            <person name="Reinhardt R."/>
            <person name="Pohl T.M."/>
            <person name="Eger P."/>
            <person name="Zimmermann W."/>
            <person name="Wedler H."/>
            <person name="Wambutt R."/>
            <person name="Purnelle B."/>
            <person name="Goffeau A."/>
            <person name="Cadieu E."/>
            <person name="Dreano S."/>
            <person name="Gloux S."/>
            <person name="Lelaure V."/>
            <person name="Mottier S."/>
            <person name="Galibert F."/>
            <person name="Aves S.J."/>
            <person name="Xiang Z."/>
            <person name="Hunt C."/>
            <person name="Moore K."/>
            <person name="Hurst S.M."/>
            <person name="Lucas M."/>
            <person name="Rochet M."/>
            <person name="Gaillardin C."/>
            <person name="Tallada V.A."/>
            <person name="Garzon A."/>
            <person name="Thode G."/>
            <person name="Daga R.R."/>
            <person name="Cruzado L."/>
            <person name="Jimenez J."/>
            <person name="Sanchez M."/>
            <person name="del Rey F."/>
            <person name="Benito J."/>
            <person name="Dominguez A."/>
            <person name="Revuelta J.L."/>
            <person name="Moreno S."/>
            <person name="Armstrong J."/>
            <person name="Forsburg S.L."/>
            <person name="Cerutti L."/>
            <person name="Lowe T."/>
            <person name="McCombie W.R."/>
            <person name="Paulsen I."/>
            <person name="Potashkin J."/>
            <person name="Shpakovski G.V."/>
            <person name="Ussery D."/>
            <person name="Barrell B.G."/>
            <person name="Nurse P."/>
        </authorList>
    </citation>
    <scope>NUCLEOTIDE SEQUENCE [LARGE SCALE GENOMIC DNA]</scope>
    <source>
        <strain>972 / ATCC 24843</strain>
    </source>
</reference>
<reference key="2">
    <citation type="journal article" date="2002" name="Proc. Natl. Acad. Sci. U.S.A.">
        <title>Dicer is required for chromosome segregation and gene silencing in fission yeast cells.</title>
        <authorList>
            <person name="Provost P."/>
            <person name="Silverstein R.A."/>
            <person name="Dishart D."/>
            <person name="Walfridsson J."/>
            <person name="Djupedal I."/>
            <person name="Kniola B."/>
            <person name="Wright A."/>
            <person name="Samuelsson B."/>
            <person name="Raadmark O."/>
            <person name="Ekwall K."/>
        </authorList>
    </citation>
    <scope>FUNCTION</scope>
    <scope>RNA CLEAVAGE</scope>
</reference>
<reference key="3">
    <citation type="journal article" date="2002" name="Science">
        <title>Regulation of heterochromatic silencing and histone H3 lysine-9 methylation by RNAi.</title>
        <authorList>
            <person name="Volpe T.A."/>
            <person name="Kidner C."/>
            <person name="Hall I.M."/>
            <person name="Teng G."/>
            <person name="Grewal S.I.S."/>
            <person name="Martienssen R.A."/>
        </authorList>
    </citation>
    <scope>FUNCTION</scope>
</reference>
<reference key="4">
    <citation type="journal article" date="2002" name="Science">
        <title>Establishment and maintenance of a heterochromatin domain.</title>
        <authorList>
            <person name="Hall I.M."/>
            <person name="Shankaranarayana G.D."/>
            <person name="Noma K."/>
            <person name="Ayoub N."/>
            <person name="Cohen A."/>
            <person name="Grewal S.I.S."/>
        </authorList>
    </citation>
    <scope>FUNCTION</scope>
</reference>
<reference key="5">
    <citation type="journal article" date="2003" name="Chromosome Res.">
        <title>RNA interference is required for normal centromere function in fission yeast.</title>
        <authorList>
            <person name="Volpe T."/>
            <person name="Schramke V."/>
            <person name="Hamilton G.L."/>
            <person name="White S.A."/>
            <person name="Teng G."/>
            <person name="Martienssen R.A."/>
            <person name="Allshire R.C."/>
        </authorList>
    </citation>
    <scope>FUNCTION</scope>
</reference>
<reference key="6">
    <citation type="journal article" date="2003" name="Proc. Natl. Acad. Sci. U.S.A.">
        <title>RNA interference machinery regulates chromosome dynamics during mitosis and meiosis in fission yeast.</title>
        <authorList>
            <person name="Hall I.M."/>
            <person name="Noma K."/>
            <person name="Grewal S.I.S."/>
        </authorList>
    </citation>
    <scope>FUNCTION</scope>
</reference>
<reference key="7">
    <citation type="journal article" date="2004" name="Genes Dev.">
        <title>A single Argonaute protein mediates both transcriptional and posttranscriptional silencing in Schizosaccharomyces pombe.</title>
        <authorList>
            <person name="Sigova A."/>
            <person name="Rhind N."/>
            <person name="Zamore P.D."/>
        </authorList>
    </citation>
    <scope>FUNCTION</scope>
</reference>
<reference key="8">
    <citation type="journal article" date="2004" name="Mol. Biol. Cell">
        <title>ago1 and dcr1, two core components of the RNA interference pathway, functionally diverge from rdp1 in regulating cell cycle events in Schizosaccharomyces pombe.</title>
        <authorList>
            <person name="Carmichael J.B."/>
            <person name="Provost P."/>
            <person name="Ekwall K."/>
            <person name="Hobman T.C."/>
        </authorList>
    </citation>
    <scope>FUNCTION</scope>
</reference>
<reference key="9">
    <citation type="journal article" date="2005" name="Protein Pept. Lett.">
        <title>Expression and purification of the carboxyl terminus domain of Schizosaccharomyces pombe dicer in Escherichia coli.</title>
        <authorList>
            <person name="Qian Z."/>
            <person name="Xuan B."/>
            <person name="Hong J."/>
            <person name="Hao Z."/>
            <person name="Wang L."/>
            <person name="Huang W."/>
        </authorList>
    </citation>
    <scope>FUNCTION</scope>
    <scope>RNA CLEAVAGE</scope>
</reference>
<reference key="10">
    <citation type="journal article" date="2006" name="Nat. Biotechnol.">
        <title>ORFeome cloning and global analysis of protein localization in the fission yeast Schizosaccharomyces pombe.</title>
        <authorList>
            <person name="Matsuyama A."/>
            <person name="Arai R."/>
            <person name="Yashiroda Y."/>
            <person name="Shirai A."/>
            <person name="Kamata A."/>
            <person name="Sekido S."/>
            <person name="Kobayashi Y."/>
            <person name="Hashimoto A."/>
            <person name="Hamamoto M."/>
            <person name="Hiraoka Y."/>
            <person name="Horinouchi S."/>
            <person name="Yoshida M."/>
        </authorList>
    </citation>
    <scope>SUBCELLULAR LOCATION [LARGE SCALE ANALYSIS]</scope>
</reference>
<reference key="11">
    <citation type="journal article" date="2011" name="EMBO J.">
        <title>An extended dsRBD with a novel zinc-binding motif mediates nuclear retention of fission yeast Dicer.</title>
        <authorList>
            <person name="Barraud P."/>
            <person name="Emmerth S."/>
            <person name="Shimada Y."/>
            <person name="Hotz H.R."/>
            <person name="Allain F.H."/>
            <person name="Buehler M."/>
        </authorList>
    </citation>
    <scope>STRUCTURE BY NMR OF 1259-1358 IN COMPLEX WITH ZINC</scope>
    <scope>DOMAIN</scope>
    <scope>SUBCELLULAR LOCATION</scope>
    <scope>FUNCTION</scope>
    <scope>MUTAGENESIS OF LYS-1265; CYS-1275; 1287-VAL--THR-1302; ARG-1322; ARG-1334; ASN-1344; TYR-1348; SER-1349; CYS-1350 AND CYS-1352</scope>
</reference>
<name>DCR1_SCHPO</name>
<feature type="chain" id="PRO_0000102194" description="Protein Dicer">
    <location>
        <begin position="1"/>
        <end position="1374"/>
    </location>
</feature>
<feature type="domain" description="Helicase ATP-binding" evidence="3">
    <location>
        <begin position="19"/>
        <end position="206"/>
    </location>
</feature>
<feature type="domain" description="Helicase C-terminal" evidence="4">
    <location>
        <begin position="340"/>
        <end position="517"/>
    </location>
</feature>
<feature type="domain" description="Dicer dsRNA-binding fold" evidence="5">
    <location>
        <begin position="537"/>
        <end position="628"/>
    </location>
</feature>
<feature type="domain" description="RNase III 1" evidence="2">
    <location>
        <begin position="916"/>
        <end position="1038"/>
    </location>
</feature>
<feature type="domain" description="RNase III 2" evidence="2">
    <location>
        <begin position="1083"/>
        <end position="1233"/>
    </location>
</feature>
<feature type="region of interest" description="C-terminal dsRNA-binding fold" evidence="12">
    <location>
        <begin position="1263"/>
        <end position="1355"/>
    </location>
</feature>
<feature type="short sequence motif" description="DECH box" evidence="13">
    <location>
        <begin position="145"/>
        <end position="148"/>
    </location>
</feature>
<feature type="binding site" evidence="3">
    <location>
        <begin position="32"/>
        <end position="39"/>
    </location>
    <ligand>
        <name>ATP</name>
        <dbReference type="ChEBI" id="CHEBI:30616"/>
    </ligand>
</feature>
<feature type="binding site" evidence="1">
    <location>
        <position position="1123"/>
    </location>
    <ligand>
        <name>Mg(2+)</name>
        <dbReference type="ChEBI" id="CHEBI:18420"/>
    </ligand>
</feature>
<feature type="binding site" evidence="1">
    <location>
        <position position="1219"/>
    </location>
    <ligand>
        <name>Mg(2+)</name>
        <dbReference type="ChEBI" id="CHEBI:18420"/>
    </ligand>
</feature>
<feature type="binding site" evidence="1">
    <location>
        <position position="1222"/>
    </location>
    <ligand>
        <name>Mg(2+)</name>
        <dbReference type="ChEBI" id="CHEBI:18420"/>
    </ligand>
</feature>
<feature type="binding site" evidence="12 14">
    <location>
        <position position="1275"/>
    </location>
    <ligand>
        <name>Zn(2+)</name>
        <dbReference type="ChEBI" id="CHEBI:29105"/>
    </ligand>
</feature>
<feature type="binding site" evidence="12 14">
    <location>
        <position position="1312"/>
    </location>
    <ligand>
        <name>Zn(2+)</name>
        <dbReference type="ChEBI" id="CHEBI:29105"/>
    </ligand>
</feature>
<feature type="binding site" evidence="12 14">
    <location>
        <position position="1350"/>
    </location>
    <ligand>
        <name>Zn(2+)</name>
        <dbReference type="ChEBI" id="CHEBI:29105"/>
    </ligand>
</feature>
<feature type="binding site" evidence="12 14">
    <location>
        <position position="1352"/>
    </location>
    <ligand>
        <name>Zn(2+)</name>
        <dbReference type="ChEBI" id="CHEBI:29105"/>
    </ligand>
</feature>
<feature type="site" description="Important for activity" evidence="1">
    <location>
        <position position="1215"/>
    </location>
</feature>
<feature type="mutagenesis site" description="Abolishes binding to dsRNA and dsDNA. No effect on retention in the nucleus, nor on function in RNAi-dependent heterochromatin assembly." evidence="12">
    <original>K</original>
    <variation>A</variation>
    <location>
        <position position="1265"/>
    </location>
</feature>
<feature type="mutagenesis site" description="Abolishes retention in the nucleus and function in RNAi-dependent heterochromatin assembly; when associated with S-1350 and S-1352." evidence="12">
    <original>C</original>
    <variation>S</variation>
    <location>
        <position position="1275"/>
    </location>
</feature>
<feature type="mutagenesis site" description="Abolishes binding to dsRNA and dsDNA. No effect on retention in the nucleus, nor on function in RNAi-dependent heterochromatin assembly." evidence="12">
    <location>
        <begin position="1287"/>
        <end position="1302"/>
    </location>
</feature>
<feature type="mutagenesis site" description="Abolishes binding to dsRNA and dsDNA. No effect on retention in the nucleus, nor on function in RNAi-dependent heterochromatin assembly." evidence="12">
    <original>R</original>
    <variation>A</variation>
    <location>
        <position position="1322"/>
    </location>
</feature>
<feature type="mutagenesis site" description="No effect on retention in the nucleus." evidence="12">
    <original>R</original>
    <variation>A</variation>
    <location>
        <position position="1334"/>
    </location>
</feature>
<feature type="mutagenesis site" description="Decreases location in the nucleus. Abolishes retention in the nucleus; when associated with A-1348 and A-1349." evidence="12">
    <original>N</original>
    <variation>A</variation>
    <location>
        <position position="1344"/>
    </location>
</feature>
<feature type="mutagenesis site" description="Decreases location in the nucleus. Abolishes retention in the nucleus; when associated with A-1344 and A-1349." evidence="12">
    <original>Y</original>
    <variation>A</variation>
    <location>
        <position position="1348"/>
    </location>
</feature>
<feature type="mutagenesis site" description="Decreases location in the nucleus. Abolishes retention in the nucleus; when associated with A-1344 and A-1348." evidence="12">
    <original>S</original>
    <variation>A</variation>
    <location>
        <position position="1349"/>
    </location>
</feature>
<feature type="mutagenesis site" description="Abolishes retention in the nucleus and function in RNAi-dependent heterochromatin assembly; when associated with S-1275 and S-1352." evidence="12">
    <original>C</original>
    <variation>S</variation>
    <location>
        <position position="1350"/>
    </location>
</feature>
<feature type="mutagenesis site" description="Abolishes retention in the nucleus and function in RNAi-dependent heterochromatin assembly; when associated with S-1275 and S-1350." evidence="12">
    <original>C</original>
    <variation>S</variation>
    <location>
        <position position="1352"/>
    </location>
</feature>
<feature type="helix" evidence="15">
    <location>
        <begin position="1262"/>
        <end position="1270"/>
    </location>
</feature>
<feature type="turn" evidence="15">
    <location>
        <begin position="1271"/>
        <end position="1274"/>
    </location>
</feature>
<feature type="strand" evidence="15">
    <location>
        <begin position="1278"/>
        <end position="1286"/>
    </location>
</feature>
<feature type="strand" evidence="15">
    <location>
        <begin position="1294"/>
        <end position="1297"/>
    </location>
</feature>
<feature type="strand" evidence="15">
    <location>
        <begin position="1303"/>
        <end position="1311"/>
    </location>
</feature>
<feature type="strand" evidence="15">
    <location>
        <begin position="1314"/>
        <end position="1323"/>
    </location>
</feature>
<feature type="helix" evidence="15">
    <location>
        <begin position="1324"/>
        <end position="1341"/>
    </location>
</feature>
<feature type="helix" evidence="15">
    <location>
        <begin position="1344"/>
        <end position="1347"/>
    </location>
</feature>
<feature type="turn" evidence="15">
    <location>
        <begin position="1351"/>
        <end position="1353"/>
    </location>
</feature>
<gene>
    <name type="primary">dcr1</name>
    <name type="ORF">SPCC188.13c</name>
    <name type="ORF">SPCC584.10c</name>
</gene>
<sequence length="1374" mass="158040">MDISSFLLPQLLRKYQQDVYNIASKQNTLLVMRTGAGKTLLAVKLIKQKLEEQILIQESNLEHKKISVFLVNKVPLVFQQAEYIRSQLPAKVGMFYGELSIEMSEQLLTNIILKYNVIVITADLFYLFLARGFLSINDLNLIIFDECHHAIGNDAYARIMNDFYHRAKAVLSKKHFTLPRIFGMTASPFTGKKGNLYHRLYQWEQLFDSKAHVVSENELADYFCLPEESYVMYSNKLVVPPSDSIIKKCEETLQGCKLISRAVKTALAETIDMGLWFGEQVWLYLVDFVETKRLKKKALGKQLSDDEELAIDRLKIFVEDWKNNKYSDNGPRIPVFDSTDVTDKVFKLLELLKATYRKSDSVRTVIFVERKATAFTLSLFMKTLNLPNIRAHSFIGHGPSDQGEFSMTFRRQKDTLHKFKTGKYNVLIATAVAEEGIDVPSCNLVIRFNICRTVTQYVQSRGRARAMASKFLIFLNTEELLIHERILHEEKNLKFALSELSNSNIFDSLVCEERERVTDDIVYEVGETGALLTGLYAVSLLYNFCNTLSRDVYTRYYPTFTAQPCLSGWYCFEVELPKACKVPAAQGSPAKSIRKAKQNAAFIMCLDLIRMGLIDKHLKPLDFRRKIADLETLEEDELKDEGYIETYERYVPKSWMKVPEDITRCFVSLLYTDANEGDNHIFHPLVFVQAHSFPKIDSFILNSTVGPRVKIVLETIEDSFKIDSHLLELLKKSTRYLLQFGLSTSLEQQIPTPYWLAPLNLSCTDYRFLENLIDVDTIQNFFKLPEPVQNVTDLQSDTVLLVNPQSIYEQYAFEGFVNSEFMIPAKKKDKAPSALCKKLPLRLNYSLWGNRAKSIPKSQQVRSFYINDLYILPVSRHLKNSALLIPSILYHIENLLVASSFIEHFRLDCKIDTACQALTSAESQLNFDYDRLEFYGDCFLKLGASITVFLKFPDTQEYQLHFNRKKIISNCNLYKVAIDCELPKYALSTPLEIRHWCPYGFQKSTSDKCRYAVLQKLSVKRIADMVEASIGACLLDSGLDSALKICKSLSVGLLDISNWDEWNNYFDLNTYADSLRNVQFPYSSYIEETIGYSFKNKKLLHLAFIHPSMMSQQGIYENYQQLEFLGDAVLDYIIVQYLYKKYPNATSGELTDYKSFYVCNKSLSYIGFVLNLHKYIQHESAAMCDAIFEYQELIEAFRETASENPWFWFEIDSPKFISDTLEAMICAIFLDSGFSLQSLQFVLPLFLNSLGDATHTKAKGDIEHKVYQLLKDQGCEDFGTKCVIEEVKSSHKTLLNTELHLTKYYGFSFFRHGNIVAYGKSRKVANAKYIMKQRLLKLLEDKSNLLLYSCNCKFSKKKPSDEQIKGDGKVKSLT</sequence>
<evidence type="ECO:0000250" key="1"/>
<evidence type="ECO:0000255" key="2">
    <source>
        <dbReference type="PROSITE-ProRule" id="PRU00177"/>
    </source>
</evidence>
<evidence type="ECO:0000255" key="3">
    <source>
        <dbReference type="PROSITE-ProRule" id="PRU00541"/>
    </source>
</evidence>
<evidence type="ECO:0000255" key="4">
    <source>
        <dbReference type="PROSITE-ProRule" id="PRU00542"/>
    </source>
</evidence>
<evidence type="ECO:0000255" key="5">
    <source>
        <dbReference type="PROSITE-ProRule" id="PRU00657"/>
    </source>
</evidence>
<evidence type="ECO:0000269" key="6">
    <source>
    </source>
</evidence>
<evidence type="ECO:0000269" key="7">
    <source>
    </source>
</evidence>
<evidence type="ECO:0000269" key="8">
    <source>
    </source>
</evidence>
<evidence type="ECO:0000269" key="9">
    <source>
    </source>
</evidence>
<evidence type="ECO:0000269" key="10">
    <source>
    </source>
</evidence>
<evidence type="ECO:0000269" key="11">
    <source>
    </source>
</evidence>
<evidence type="ECO:0000269" key="12">
    <source>
    </source>
</evidence>
<evidence type="ECO:0000305" key="13"/>
<evidence type="ECO:0007744" key="14">
    <source>
        <dbReference type="PDB" id="2L6M"/>
    </source>
</evidence>
<evidence type="ECO:0007829" key="15">
    <source>
        <dbReference type="PDB" id="2L6M"/>
    </source>
</evidence>
<dbReference type="EC" id="3.1.26.-"/>
<dbReference type="EC" id="3.6.4.-"/>
<dbReference type="EMBL" id="CU329672">
    <property type="protein sequence ID" value="CAB41233.2"/>
    <property type="molecule type" value="Genomic_DNA"/>
</dbReference>
<dbReference type="PIR" id="T39130">
    <property type="entry name" value="S62524"/>
</dbReference>
<dbReference type="RefSeq" id="NP_588215.2">
    <property type="nucleotide sequence ID" value="NM_001023205.2"/>
</dbReference>
<dbReference type="PDB" id="2L6M">
    <property type="method" value="NMR"/>
    <property type="chains" value="A=1259-1358"/>
</dbReference>
<dbReference type="PDBsum" id="2L6M"/>
<dbReference type="SMR" id="Q09884"/>
<dbReference type="BioGRID" id="275506">
    <property type="interactions" value="215"/>
</dbReference>
<dbReference type="FunCoup" id="Q09884">
    <property type="interactions" value="342"/>
</dbReference>
<dbReference type="STRING" id="284812.Q09884"/>
<dbReference type="iPTMnet" id="Q09884"/>
<dbReference type="SwissPalm" id="Q09884"/>
<dbReference type="PaxDb" id="4896-SPCC188.13c.1"/>
<dbReference type="EnsemblFungi" id="SPCC188.13c.1">
    <property type="protein sequence ID" value="SPCC188.13c.1:pep"/>
    <property type="gene ID" value="SPCC188.13c"/>
</dbReference>
<dbReference type="GeneID" id="2538930"/>
<dbReference type="KEGG" id="spo:2538930"/>
<dbReference type="PomBase" id="SPCC188.13c">
    <property type="gene designation" value="dcr1"/>
</dbReference>
<dbReference type="VEuPathDB" id="FungiDB:SPCC188.13c"/>
<dbReference type="eggNOG" id="KOG0701">
    <property type="taxonomic scope" value="Eukaryota"/>
</dbReference>
<dbReference type="HOGENOM" id="CLU_000907_4_3_1"/>
<dbReference type="InParanoid" id="Q09884"/>
<dbReference type="OMA" id="TRKNHAY"/>
<dbReference type="PhylomeDB" id="Q09884"/>
<dbReference type="PRO" id="PR:Q09884"/>
<dbReference type="Proteomes" id="UP000002485">
    <property type="component" value="Chromosome III"/>
</dbReference>
<dbReference type="GO" id="GO:0000785">
    <property type="term" value="C:chromatin"/>
    <property type="evidence" value="ECO:0000314"/>
    <property type="project" value="PomBase"/>
</dbReference>
<dbReference type="GO" id="GO:0005737">
    <property type="term" value="C:cytoplasm"/>
    <property type="evidence" value="ECO:0000314"/>
    <property type="project" value="PomBase"/>
</dbReference>
<dbReference type="GO" id="GO:0005829">
    <property type="term" value="C:cytosol"/>
    <property type="evidence" value="ECO:0000314"/>
    <property type="project" value="PomBase"/>
</dbReference>
<dbReference type="GO" id="GO:0000791">
    <property type="term" value="C:euchromatin"/>
    <property type="evidence" value="ECO:0000314"/>
    <property type="project" value="PomBase"/>
</dbReference>
<dbReference type="GO" id="GO:0034399">
    <property type="term" value="C:nuclear periphery"/>
    <property type="evidence" value="ECO:0000314"/>
    <property type="project" value="PomBase"/>
</dbReference>
<dbReference type="GO" id="GO:0005634">
    <property type="term" value="C:nucleus"/>
    <property type="evidence" value="ECO:0000314"/>
    <property type="project" value="PomBase"/>
</dbReference>
<dbReference type="GO" id="GO:0005721">
    <property type="term" value="C:pericentric heterochromatin"/>
    <property type="evidence" value="ECO:0000314"/>
    <property type="project" value="PomBase"/>
</dbReference>
<dbReference type="GO" id="GO:0005524">
    <property type="term" value="F:ATP binding"/>
    <property type="evidence" value="ECO:0007669"/>
    <property type="project" value="UniProtKB-KW"/>
</dbReference>
<dbReference type="GO" id="GO:0003690">
    <property type="term" value="F:double-stranded DNA binding"/>
    <property type="evidence" value="ECO:0000314"/>
    <property type="project" value="PomBase"/>
</dbReference>
<dbReference type="GO" id="GO:0003725">
    <property type="term" value="F:double-stranded RNA binding"/>
    <property type="evidence" value="ECO:0000314"/>
    <property type="project" value="PomBase"/>
</dbReference>
<dbReference type="GO" id="GO:1990188">
    <property type="term" value="F:euchromatin binding"/>
    <property type="evidence" value="ECO:0000314"/>
    <property type="project" value="PomBase"/>
</dbReference>
<dbReference type="GO" id="GO:0004386">
    <property type="term" value="F:helicase activity"/>
    <property type="evidence" value="ECO:0007669"/>
    <property type="project" value="UniProtKB-KW"/>
</dbReference>
<dbReference type="GO" id="GO:0004525">
    <property type="term" value="F:ribonuclease III activity"/>
    <property type="evidence" value="ECO:0000314"/>
    <property type="project" value="PomBase"/>
</dbReference>
<dbReference type="GO" id="GO:0003723">
    <property type="term" value="F:RNA binding"/>
    <property type="evidence" value="ECO:0000318"/>
    <property type="project" value="GO_Central"/>
</dbReference>
<dbReference type="GO" id="GO:0008270">
    <property type="term" value="F:zinc ion binding"/>
    <property type="evidence" value="ECO:0000314"/>
    <property type="project" value="PomBase"/>
</dbReference>
<dbReference type="GO" id="GO:0007059">
    <property type="term" value="P:chromosome segregation"/>
    <property type="evidence" value="ECO:0007669"/>
    <property type="project" value="UniProtKB-KW"/>
</dbReference>
<dbReference type="GO" id="GO:0033562">
    <property type="term" value="P:co-transcriptional gene silencing by RNA interference machinery"/>
    <property type="evidence" value="ECO:0000315"/>
    <property type="project" value="PomBase"/>
</dbReference>
<dbReference type="GO" id="GO:0070317">
    <property type="term" value="P:negative regulation of G0 to G1 transition"/>
    <property type="evidence" value="ECO:0000315"/>
    <property type="project" value="PomBase"/>
</dbReference>
<dbReference type="GO" id="GO:0010629">
    <property type="term" value="P:negative regulation of gene expression"/>
    <property type="evidence" value="ECO:0000315"/>
    <property type="project" value="CACAO"/>
</dbReference>
<dbReference type="GO" id="GO:0030466">
    <property type="term" value="P:silent mating-type cassette heterochromatin formation"/>
    <property type="evidence" value="ECO:0000269"/>
    <property type="project" value="PomBase"/>
</dbReference>
<dbReference type="GO" id="GO:0030422">
    <property type="term" value="P:siRNA processing"/>
    <property type="evidence" value="ECO:0000318"/>
    <property type="project" value="GO_Central"/>
</dbReference>
<dbReference type="GO" id="GO:0140727">
    <property type="term" value="P:siRNA-mediated pericentric heterochromatin formation"/>
    <property type="evidence" value="ECO:0000315"/>
    <property type="project" value="PomBase"/>
</dbReference>
<dbReference type="GO" id="GO:0006363">
    <property type="term" value="P:termination of RNA polymerase I transcription"/>
    <property type="evidence" value="ECO:0000315"/>
    <property type="project" value="PomBase"/>
</dbReference>
<dbReference type="GO" id="GO:0006369">
    <property type="term" value="P:termination of RNA polymerase II transcription"/>
    <property type="evidence" value="ECO:0000315"/>
    <property type="project" value="PomBase"/>
</dbReference>
<dbReference type="GO" id="GO:0006386">
    <property type="term" value="P:termination of RNA polymerase III transcription"/>
    <property type="evidence" value="ECO:0000315"/>
    <property type="project" value="PomBase"/>
</dbReference>
<dbReference type="CDD" id="cd18034">
    <property type="entry name" value="DEXHc_dicer"/>
    <property type="match status" value="1"/>
</dbReference>
<dbReference type="CDD" id="cd00593">
    <property type="entry name" value="RIBOc"/>
    <property type="match status" value="2"/>
</dbReference>
<dbReference type="CDD" id="cd18802">
    <property type="entry name" value="SF2_C_dicer"/>
    <property type="match status" value="1"/>
</dbReference>
<dbReference type="FunFam" id="3.40.50.300:FF:000628">
    <property type="entry name" value="Endoribonuclease Dicer"/>
    <property type="match status" value="1"/>
</dbReference>
<dbReference type="FunFam" id="1.10.1520.10:FF:000036">
    <property type="entry name" value="Ribonuclease 3-like protein 3"/>
    <property type="match status" value="1"/>
</dbReference>
<dbReference type="Gene3D" id="3.30.160.400">
    <property type="match status" value="1"/>
</dbReference>
<dbReference type="Gene3D" id="3.30.160.380">
    <property type="entry name" value="Dicer dimerisation domain"/>
    <property type="match status" value="1"/>
</dbReference>
<dbReference type="Gene3D" id="3.40.50.300">
    <property type="entry name" value="P-loop containing nucleotide triphosphate hydrolases"/>
    <property type="match status" value="2"/>
</dbReference>
<dbReference type="Gene3D" id="1.10.1520.10">
    <property type="entry name" value="Ribonuclease III domain"/>
    <property type="match status" value="2"/>
</dbReference>
<dbReference type="InterPro" id="IPR055044">
    <property type="entry name" value="Dcr1_dsRNA-bd_dom"/>
</dbReference>
<dbReference type="InterPro" id="IPR038248">
    <property type="entry name" value="Dicer_dimer_sf"/>
</dbReference>
<dbReference type="InterPro" id="IPR005034">
    <property type="entry name" value="Dicer_dimerisation_dom"/>
</dbReference>
<dbReference type="InterPro" id="IPR006935">
    <property type="entry name" value="Helicase/UvrB_N"/>
</dbReference>
<dbReference type="InterPro" id="IPR014001">
    <property type="entry name" value="Helicase_ATP-bd"/>
</dbReference>
<dbReference type="InterPro" id="IPR001650">
    <property type="entry name" value="Helicase_C-like"/>
</dbReference>
<dbReference type="InterPro" id="IPR027417">
    <property type="entry name" value="P-loop_NTPase"/>
</dbReference>
<dbReference type="InterPro" id="IPR000999">
    <property type="entry name" value="RNase_III_dom"/>
</dbReference>
<dbReference type="InterPro" id="IPR036389">
    <property type="entry name" value="RNase_III_sf"/>
</dbReference>
<dbReference type="PANTHER" id="PTHR14950">
    <property type="entry name" value="DICER-RELATED"/>
    <property type="match status" value="1"/>
</dbReference>
<dbReference type="PANTHER" id="PTHR14950:SF37">
    <property type="entry name" value="ENDORIBONUCLEASE DICER"/>
    <property type="match status" value="1"/>
</dbReference>
<dbReference type="Pfam" id="PF22389">
    <property type="entry name" value="Dcr1-like_dsRNA-bd_dom"/>
    <property type="match status" value="1"/>
</dbReference>
<dbReference type="Pfam" id="PF03368">
    <property type="entry name" value="Dicer_dimer"/>
    <property type="match status" value="1"/>
</dbReference>
<dbReference type="Pfam" id="PF00271">
    <property type="entry name" value="Helicase_C"/>
    <property type="match status" value="1"/>
</dbReference>
<dbReference type="Pfam" id="PF04851">
    <property type="entry name" value="ResIII"/>
    <property type="match status" value="1"/>
</dbReference>
<dbReference type="Pfam" id="PF00636">
    <property type="entry name" value="Ribonuclease_3"/>
    <property type="match status" value="2"/>
</dbReference>
<dbReference type="SMART" id="SM00487">
    <property type="entry name" value="DEXDc"/>
    <property type="match status" value="1"/>
</dbReference>
<dbReference type="SMART" id="SM00490">
    <property type="entry name" value="HELICc"/>
    <property type="match status" value="1"/>
</dbReference>
<dbReference type="SMART" id="SM00535">
    <property type="entry name" value="RIBOc"/>
    <property type="match status" value="2"/>
</dbReference>
<dbReference type="SUPFAM" id="SSF52540">
    <property type="entry name" value="P-loop containing nucleoside triphosphate hydrolases"/>
    <property type="match status" value="1"/>
</dbReference>
<dbReference type="SUPFAM" id="SSF69065">
    <property type="entry name" value="RNase III domain-like"/>
    <property type="match status" value="2"/>
</dbReference>
<dbReference type="PROSITE" id="PS51327">
    <property type="entry name" value="DICER_DSRBF"/>
    <property type="match status" value="1"/>
</dbReference>
<dbReference type="PROSITE" id="PS51192">
    <property type="entry name" value="HELICASE_ATP_BIND_1"/>
    <property type="match status" value="1"/>
</dbReference>
<dbReference type="PROSITE" id="PS51194">
    <property type="entry name" value="HELICASE_CTER"/>
    <property type="match status" value="1"/>
</dbReference>
<dbReference type="PROSITE" id="PS00517">
    <property type="entry name" value="RNASE_3_1"/>
    <property type="match status" value="1"/>
</dbReference>
<dbReference type="PROSITE" id="PS50142">
    <property type="entry name" value="RNASE_3_2"/>
    <property type="match status" value="2"/>
</dbReference>
<keyword id="KW-0002">3D-structure</keyword>
<keyword id="KW-0067">ATP-binding</keyword>
<keyword id="KW-0131">Cell cycle</keyword>
<keyword id="KW-0159">Chromosome partition</keyword>
<keyword id="KW-0963">Cytoplasm</keyword>
<keyword id="KW-0255">Endonuclease</keyword>
<keyword id="KW-0347">Helicase</keyword>
<keyword id="KW-0378">Hydrolase</keyword>
<keyword id="KW-0460">Magnesium</keyword>
<keyword id="KW-0464">Manganese</keyword>
<keyword id="KW-0479">Metal-binding</keyword>
<keyword id="KW-0540">Nuclease</keyword>
<keyword id="KW-0547">Nucleotide-binding</keyword>
<keyword id="KW-0539">Nucleus</keyword>
<keyword id="KW-1185">Reference proteome</keyword>
<keyword id="KW-0677">Repeat</keyword>
<keyword id="KW-0943">RNA-mediated gene silencing</keyword>
<keyword id="KW-0862">Zinc</keyword>
<proteinExistence type="evidence at protein level"/>
<comment type="function">
    <text>Required for G1 arrest and mating in response to nitrogen starvation. Ago1 regulation of cytokinesis and cell cycle checkpoints occurs downstream of dcr1. Required, indirectly, for regulated hyperphosphorylation of cdc2.</text>
</comment>
<comment type="function">
    <text evidence="6 7 8 9 10 12">Has a role in the RNA interference (RNAi) pathway which is important for heterochromatin formation, accurate chromosome segregation, centromere cohesion and telomere function during mitosis and meiosis. Digests double-stranded RNA (dsRNA) producing 21 to 23 bp dsRNAs, so-called interfering RNAs (siRNA). Required for both post-transcriptional and transcriptional gene silencing. Required for silencing at the centromeres and for initiation of transcriptionally silent heterochromatin at the mating type locus. Promotes histone H3 'Lys-10' methylation necessary for centromere function. Required for recruitment of swi6 and cohesin to an ectopic dg repeat.</text>
</comment>
<comment type="cofactor">
    <cofactor evidence="1">
        <name>Mg(2+)</name>
        <dbReference type="ChEBI" id="CHEBI:18420"/>
    </cofactor>
    <cofactor evidence="1">
        <name>Mn(2+)</name>
        <dbReference type="ChEBI" id="CHEBI:29035"/>
    </cofactor>
</comment>
<comment type="subcellular location">
    <subcellularLocation>
        <location evidence="11">Cytoplasm</location>
    </subcellularLocation>
    <subcellularLocation>
        <location evidence="11 12">Nucleus</location>
    </subcellularLocation>
</comment>
<comment type="domain">
    <text evidence="12">The C-terminal dsRNA-binding fold contains a bound zinc ion and is important for normal nuclear retention and function in RNAi-dependent heterochromatin assembly. It binds double-stranded DNA and RNA (in vitro).</text>
</comment>
<comment type="similarity">
    <text evidence="5">Belongs to the helicase family. Dicer subfamily.</text>
</comment>
<accession>Q09884</accession>
<accession>Q9UUN1</accession>
<organism>
    <name type="scientific">Schizosaccharomyces pombe (strain 972 / ATCC 24843)</name>
    <name type="common">Fission yeast</name>
    <dbReference type="NCBI Taxonomy" id="284812"/>
    <lineage>
        <taxon>Eukaryota</taxon>
        <taxon>Fungi</taxon>
        <taxon>Dikarya</taxon>
        <taxon>Ascomycota</taxon>
        <taxon>Taphrinomycotina</taxon>
        <taxon>Schizosaccharomycetes</taxon>
        <taxon>Schizosaccharomycetales</taxon>
        <taxon>Schizosaccharomycetaceae</taxon>
        <taxon>Schizosaccharomyces</taxon>
    </lineage>
</organism>